<proteinExistence type="evidence at transcript level"/>
<gene>
    <name type="primary">GARIN4</name>
    <name type="synonym">FAM71A</name>
    <name type="ORF">QtsA-11068</name>
</gene>
<feature type="chain" id="PRO_0000261631" description="Golgi-associated RAB2 interactor protein 4">
    <location>
        <begin position="1"/>
        <end position="594"/>
    </location>
</feature>
<feature type="region of interest" description="Disordered" evidence="2">
    <location>
        <begin position="390"/>
        <end position="525"/>
    </location>
</feature>
<feature type="compositionally biased region" description="Polar residues" evidence="2">
    <location>
        <begin position="396"/>
        <end position="406"/>
    </location>
</feature>
<feature type="compositionally biased region" description="Basic and acidic residues" evidence="2">
    <location>
        <begin position="408"/>
        <end position="433"/>
    </location>
</feature>
<feature type="compositionally biased region" description="Basic and acidic residues" evidence="2">
    <location>
        <begin position="442"/>
        <end position="455"/>
    </location>
</feature>
<feature type="compositionally biased region" description="Basic and acidic residues" evidence="2">
    <location>
        <begin position="468"/>
        <end position="477"/>
    </location>
</feature>
<feature type="compositionally biased region" description="Low complexity" evidence="2">
    <location>
        <begin position="510"/>
        <end position="521"/>
    </location>
</feature>
<keyword id="KW-0333">Golgi apparatus</keyword>
<keyword id="KW-1185">Reference proteome</keyword>
<organism>
    <name type="scientific">Macaca fascicularis</name>
    <name type="common">Crab-eating macaque</name>
    <name type="synonym">Cynomolgus monkey</name>
    <dbReference type="NCBI Taxonomy" id="9541"/>
    <lineage>
        <taxon>Eukaryota</taxon>
        <taxon>Metazoa</taxon>
        <taxon>Chordata</taxon>
        <taxon>Craniata</taxon>
        <taxon>Vertebrata</taxon>
        <taxon>Euteleostomi</taxon>
        <taxon>Mammalia</taxon>
        <taxon>Eutheria</taxon>
        <taxon>Euarchontoglires</taxon>
        <taxon>Primates</taxon>
        <taxon>Haplorrhini</taxon>
        <taxon>Catarrhini</taxon>
        <taxon>Cercopithecidae</taxon>
        <taxon>Cercopithecinae</taxon>
        <taxon>Macaca</taxon>
    </lineage>
</organism>
<accession>Q95K21</accession>
<reference key="1">
    <citation type="journal article" date="2002" name="BMC Genomics">
        <title>Cynomolgus monkey testicular cDNAs for discovery of novel human genes in the human genome sequence.</title>
        <authorList>
            <person name="Osada N."/>
            <person name="Hida M."/>
            <person name="Kusuda J."/>
            <person name="Tanuma R."/>
            <person name="Hirata M."/>
            <person name="Suto Y."/>
            <person name="Hirai M."/>
            <person name="Terao K."/>
            <person name="Sugano S."/>
            <person name="Hashimoto K."/>
        </authorList>
    </citation>
    <scope>NUCLEOTIDE SEQUENCE [LARGE SCALE MRNA]</scope>
    <source>
        <tissue>Testis</tissue>
    </source>
</reference>
<sequence length="594" mass="63372">MNGDSLLPYYTAQSGSSMSMFNTTMGRLQRQLYKGEYDIFKYAPIFGSDFIQITKRGEVIDVHNRVRMVTMGIARTSPILPLPDVMLLARPATGCEEYAGHGQATKRKKRKAAKNLELTRLLPLKFVRISVHNHEKQQLRLKFATGRSCYLQLCPALNTRDDLFAYWEKLIYLLRPPMESNSSTCGIPAEDMMWMPVFQEDRRSLEAVDLQGKGDQDQVSIRSLHMVSEVCGATSAAYAGGEGLQHDFHKPTNVLNVSIPKTSTELAEEPATGVTKEAAAAGAAAGAATGTVAGALSVAAANSAPGQVSVAIAGVATIGAGGSKSNMAIAGTASMAPNSTKVAVAGAAGKSSEHVSSTSMSLSREGSMSLAIAGVELTSRTAAETDMDAAAGLPVSTRQSKSSLSGQHGRERTQASAEACKEGRERREKDKALGRSSRRRRTGESRHKTRGDKIARKSSSRSSFSHRASRDGKKEKGCSSPGSSRHGESHKGVSHTPISKESRTSHKSGRSSSTTSSGSSKRLGRISSFLRNVRANLTTKAVGTPHGRDVDIMAKTVERSTNVANAETAEGGQGLEMVGSMTPDIMETMTFETH</sequence>
<protein>
    <recommendedName>
        <fullName>Golgi-associated RAB2 interactor protein 4</fullName>
    </recommendedName>
</protein>
<name>GAR4_MACFA</name>
<dbReference type="EMBL" id="AB070006">
    <property type="protein sequence ID" value="BAB62951.1"/>
    <property type="molecule type" value="mRNA"/>
</dbReference>
<dbReference type="eggNOG" id="ENOG502S0XQ">
    <property type="taxonomic scope" value="Eukaryota"/>
</dbReference>
<dbReference type="Proteomes" id="UP000233100">
    <property type="component" value="Unplaced"/>
</dbReference>
<dbReference type="GO" id="GO:0005794">
    <property type="term" value="C:Golgi apparatus"/>
    <property type="evidence" value="ECO:0000250"/>
    <property type="project" value="UniProtKB"/>
</dbReference>
<dbReference type="GO" id="GO:0005634">
    <property type="term" value="C:nucleus"/>
    <property type="evidence" value="ECO:0007669"/>
    <property type="project" value="TreeGrafter"/>
</dbReference>
<dbReference type="GO" id="GO:0007030">
    <property type="term" value="P:Golgi organization"/>
    <property type="evidence" value="ECO:0000250"/>
    <property type="project" value="UniProtKB"/>
</dbReference>
<dbReference type="InterPro" id="IPR022168">
    <property type="entry name" value="GARIL-like_Rab2B-bd"/>
</dbReference>
<dbReference type="PANTHER" id="PTHR22574">
    <property type="match status" value="1"/>
</dbReference>
<dbReference type="PANTHER" id="PTHR22574:SF15">
    <property type="entry name" value="GOLGI-ASSOCIATED RAB2 INTERACTOR PROTEIN 4"/>
    <property type="match status" value="1"/>
</dbReference>
<dbReference type="Pfam" id="PF12480">
    <property type="entry name" value="GARIL_Rab2_bd"/>
    <property type="match status" value="1"/>
</dbReference>
<evidence type="ECO:0000250" key="1">
    <source>
        <dbReference type="UniProtKB" id="Q8IYT1"/>
    </source>
</evidence>
<evidence type="ECO:0000256" key="2">
    <source>
        <dbReference type="SAM" id="MobiDB-lite"/>
    </source>
</evidence>
<evidence type="ECO:0000305" key="3"/>
<comment type="function">
    <text evidence="1">RAB2B effector protein required for the compacted Golgi morphology, probably through interaction with small GTPase RAB2B.</text>
</comment>
<comment type="subunit">
    <text evidence="1">Interacts (via N-terminus) with RAB2B (in GTP-bound form).</text>
</comment>
<comment type="subcellular location">
    <subcellularLocation>
        <location evidence="1">Golgi apparatus</location>
    </subcellularLocation>
</comment>
<comment type="similarity">
    <text evidence="3">Belongs to the GARIN family.</text>
</comment>